<gene>
    <name evidence="1" type="primary">serS</name>
    <name type="ordered locus">M28_Spy1472</name>
</gene>
<organism>
    <name type="scientific">Streptococcus pyogenes serotype M28 (strain MGAS6180)</name>
    <dbReference type="NCBI Taxonomy" id="319701"/>
    <lineage>
        <taxon>Bacteria</taxon>
        <taxon>Bacillati</taxon>
        <taxon>Bacillota</taxon>
        <taxon>Bacilli</taxon>
        <taxon>Lactobacillales</taxon>
        <taxon>Streptococcaceae</taxon>
        <taxon>Streptococcus</taxon>
    </lineage>
</organism>
<protein>
    <recommendedName>
        <fullName evidence="1">Serine--tRNA ligase</fullName>
        <ecNumber evidence="1">6.1.1.11</ecNumber>
    </recommendedName>
    <alternativeName>
        <fullName evidence="1">Seryl-tRNA synthetase</fullName>
        <shortName evidence="1">SerRS</shortName>
    </alternativeName>
    <alternativeName>
        <fullName evidence="1">Seryl-tRNA(Ser/Sec) synthetase</fullName>
    </alternativeName>
</protein>
<proteinExistence type="inferred from homology"/>
<feature type="chain" id="PRO_1000019842" description="Serine--tRNA ligase">
    <location>
        <begin position="1"/>
        <end position="425"/>
    </location>
</feature>
<feature type="binding site" evidence="1">
    <location>
        <begin position="230"/>
        <end position="232"/>
    </location>
    <ligand>
        <name>L-serine</name>
        <dbReference type="ChEBI" id="CHEBI:33384"/>
    </ligand>
</feature>
<feature type="binding site" evidence="1">
    <location>
        <begin position="261"/>
        <end position="263"/>
    </location>
    <ligand>
        <name>ATP</name>
        <dbReference type="ChEBI" id="CHEBI:30616"/>
    </ligand>
</feature>
<feature type="binding site" evidence="1">
    <location>
        <position position="284"/>
    </location>
    <ligand>
        <name>L-serine</name>
        <dbReference type="ChEBI" id="CHEBI:33384"/>
    </ligand>
</feature>
<feature type="binding site" evidence="1">
    <location>
        <begin position="348"/>
        <end position="351"/>
    </location>
    <ligand>
        <name>ATP</name>
        <dbReference type="ChEBI" id="CHEBI:30616"/>
    </ligand>
</feature>
<feature type="binding site" evidence="1">
    <location>
        <position position="384"/>
    </location>
    <ligand>
        <name>L-serine</name>
        <dbReference type="ChEBI" id="CHEBI:33384"/>
    </ligand>
</feature>
<name>SYS_STRPM</name>
<accession>Q48RS8</accession>
<comment type="function">
    <text evidence="1">Catalyzes the attachment of serine to tRNA(Ser). Is also able to aminoacylate tRNA(Sec) with serine, to form the misacylated tRNA L-seryl-tRNA(Sec), which will be further converted into selenocysteinyl-tRNA(Sec).</text>
</comment>
<comment type="catalytic activity">
    <reaction evidence="1">
        <text>tRNA(Ser) + L-serine + ATP = L-seryl-tRNA(Ser) + AMP + diphosphate + H(+)</text>
        <dbReference type="Rhea" id="RHEA:12292"/>
        <dbReference type="Rhea" id="RHEA-COMP:9669"/>
        <dbReference type="Rhea" id="RHEA-COMP:9703"/>
        <dbReference type="ChEBI" id="CHEBI:15378"/>
        <dbReference type="ChEBI" id="CHEBI:30616"/>
        <dbReference type="ChEBI" id="CHEBI:33019"/>
        <dbReference type="ChEBI" id="CHEBI:33384"/>
        <dbReference type="ChEBI" id="CHEBI:78442"/>
        <dbReference type="ChEBI" id="CHEBI:78533"/>
        <dbReference type="ChEBI" id="CHEBI:456215"/>
        <dbReference type="EC" id="6.1.1.11"/>
    </reaction>
</comment>
<comment type="catalytic activity">
    <reaction evidence="1">
        <text>tRNA(Sec) + L-serine + ATP = L-seryl-tRNA(Sec) + AMP + diphosphate + H(+)</text>
        <dbReference type="Rhea" id="RHEA:42580"/>
        <dbReference type="Rhea" id="RHEA-COMP:9742"/>
        <dbReference type="Rhea" id="RHEA-COMP:10128"/>
        <dbReference type="ChEBI" id="CHEBI:15378"/>
        <dbReference type="ChEBI" id="CHEBI:30616"/>
        <dbReference type="ChEBI" id="CHEBI:33019"/>
        <dbReference type="ChEBI" id="CHEBI:33384"/>
        <dbReference type="ChEBI" id="CHEBI:78442"/>
        <dbReference type="ChEBI" id="CHEBI:78533"/>
        <dbReference type="ChEBI" id="CHEBI:456215"/>
        <dbReference type="EC" id="6.1.1.11"/>
    </reaction>
</comment>
<comment type="pathway">
    <text evidence="1">Aminoacyl-tRNA biosynthesis; selenocysteinyl-tRNA(Sec) biosynthesis; L-seryl-tRNA(Sec) from L-serine and tRNA(Sec): step 1/1.</text>
</comment>
<comment type="subunit">
    <text evidence="1">Homodimer. The tRNA molecule binds across the dimer.</text>
</comment>
<comment type="subcellular location">
    <subcellularLocation>
        <location evidence="1">Cytoplasm</location>
    </subcellularLocation>
</comment>
<comment type="domain">
    <text evidence="1">Consists of two distinct domains, a catalytic core and a N-terminal extension that is involved in tRNA binding.</text>
</comment>
<comment type="similarity">
    <text evidence="1">Belongs to the class-II aminoacyl-tRNA synthetase family. Type-1 seryl-tRNA synthetase subfamily.</text>
</comment>
<sequence>MLDLKRIRTDFDTVAAKLKNRGVSEDTLTHLKELDEKRRALLVQSEELKAERNIASAAIAQAKRQKEDATQQIADMQKVSADIKTIDNQLVAIDQQVTDIITVLPNTPHDSVPVGADEEDNVEIRRWGTPRDFDFEVKAHWDLGEDLDILDWERGAKVTGARFLFYKNLGARLERALYNFMLDEHIKEGYQEIITPYMVNHDSMFGTGQYPKFKEDTFELADTNFVLIPTAEVPLTNYYRGEILDGKELPIYFTAMSPSFRSEAGSAGRDTRGLIRLHQFHKVEMVKFAKPEESYQELEKMTANAENILQKLGLPYRVISLCTGDMGFSAAKTYDLEVWIPAQNTYREISSCSNTEDFQARRAQIRYRDEADGKVKLLHTLNGSGLAVGRTVAAILENYQNEDGSVTIPEVLRSYMGGETVISPK</sequence>
<evidence type="ECO:0000255" key="1">
    <source>
        <dbReference type="HAMAP-Rule" id="MF_00176"/>
    </source>
</evidence>
<reference key="1">
    <citation type="journal article" date="2005" name="J. Infect. Dis.">
        <title>Genome sequence of a serotype M28 strain of group A Streptococcus: potential new insights into puerperal sepsis and bacterial disease specificity.</title>
        <authorList>
            <person name="Green N.M."/>
            <person name="Zhang S."/>
            <person name="Porcella S.F."/>
            <person name="Nagiec M.J."/>
            <person name="Barbian K.D."/>
            <person name="Beres S.B."/>
            <person name="Lefebvre R.B."/>
            <person name="Musser J.M."/>
        </authorList>
    </citation>
    <scope>NUCLEOTIDE SEQUENCE [LARGE SCALE GENOMIC DNA]</scope>
    <source>
        <strain>MGAS6180</strain>
    </source>
</reference>
<keyword id="KW-0030">Aminoacyl-tRNA synthetase</keyword>
<keyword id="KW-0067">ATP-binding</keyword>
<keyword id="KW-0963">Cytoplasm</keyword>
<keyword id="KW-0436">Ligase</keyword>
<keyword id="KW-0547">Nucleotide-binding</keyword>
<keyword id="KW-0648">Protein biosynthesis</keyword>
<dbReference type="EC" id="6.1.1.11" evidence="1"/>
<dbReference type="EMBL" id="CP000056">
    <property type="protein sequence ID" value="AAX72582.1"/>
    <property type="molecule type" value="Genomic_DNA"/>
</dbReference>
<dbReference type="RefSeq" id="WP_011285086.1">
    <property type="nucleotide sequence ID" value="NC_007296.2"/>
</dbReference>
<dbReference type="SMR" id="Q48RS8"/>
<dbReference type="KEGG" id="spb:M28_Spy1472"/>
<dbReference type="HOGENOM" id="CLU_023797_1_1_9"/>
<dbReference type="UniPathway" id="UPA00906">
    <property type="reaction ID" value="UER00895"/>
</dbReference>
<dbReference type="GO" id="GO:0005737">
    <property type="term" value="C:cytoplasm"/>
    <property type="evidence" value="ECO:0007669"/>
    <property type="project" value="UniProtKB-SubCell"/>
</dbReference>
<dbReference type="GO" id="GO:0005524">
    <property type="term" value="F:ATP binding"/>
    <property type="evidence" value="ECO:0007669"/>
    <property type="project" value="UniProtKB-UniRule"/>
</dbReference>
<dbReference type="GO" id="GO:0140096">
    <property type="term" value="F:catalytic activity, acting on a protein"/>
    <property type="evidence" value="ECO:0007669"/>
    <property type="project" value="UniProtKB-ARBA"/>
</dbReference>
<dbReference type="GO" id="GO:0004828">
    <property type="term" value="F:serine-tRNA ligase activity"/>
    <property type="evidence" value="ECO:0007669"/>
    <property type="project" value="UniProtKB-UniRule"/>
</dbReference>
<dbReference type="GO" id="GO:0016740">
    <property type="term" value="F:transferase activity"/>
    <property type="evidence" value="ECO:0007669"/>
    <property type="project" value="UniProtKB-ARBA"/>
</dbReference>
<dbReference type="GO" id="GO:0016260">
    <property type="term" value="P:selenocysteine biosynthetic process"/>
    <property type="evidence" value="ECO:0007669"/>
    <property type="project" value="UniProtKB-UniRule"/>
</dbReference>
<dbReference type="GO" id="GO:0006434">
    <property type="term" value="P:seryl-tRNA aminoacylation"/>
    <property type="evidence" value="ECO:0007669"/>
    <property type="project" value="UniProtKB-UniRule"/>
</dbReference>
<dbReference type="CDD" id="cd00770">
    <property type="entry name" value="SerRS_core"/>
    <property type="match status" value="1"/>
</dbReference>
<dbReference type="Gene3D" id="3.30.930.10">
    <property type="entry name" value="Bira Bifunctional Protein, Domain 2"/>
    <property type="match status" value="1"/>
</dbReference>
<dbReference type="Gene3D" id="1.10.287.40">
    <property type="entry name" value="Serine-tRNA synthetase, tRNA binding domain"/>
    <property type="match status" value="1"/>
</dbReference>
<dbReference type="HAMAP" id="MF_00176">
    <property type="entry name" value="Ser_tRNA_synth_type1"/>
    <property type="match status" value="1"/>
</dbReference>
<dbReference type="InterPro" id="IPR002314">
    <property type="entry name" value="aa-tRNA-synt_IIb"/>
</dbReference>
<dbReference type="InterPro" id="IPR006195">
    <property type="entry name" value="aa-tRNA-synth_II"/>
</dbReference>
<dbReference type="InterPro" id="IPR045864">
    <property type="entry name" value="aa-tRNA-synth_II/BPL/LPL"/>
</dbReference>
<dbReference type="InterPro" id="IPR002317">
    <property type="entry name" value="Ser-tRNA-ligase_type_1"/>
</dbReference>
<dbReference type="InterPro" id="IPR015866">
    <property type="entry name" value="Ser-tRNA-synth_1_N"/>
</dbReference>
<dbReference type="InterPro" id="IPR042103">
    <property type="entry name" value="SerRS_1_N_sf"/>
</dbReference>
<dbReference type="InterPro" id="IPR033729">
    <property type="entry name" value="SerRS_core"/>
</dbReference>
<dbReference type="InterPro" id="IPR010978">
    <property type="entry name" value="tRNA-bd_arm"/>
</dbReference>
<dbReference type="NCBIfam" id="TIGR00414">
    <property type="entry name" value="serS"/>
    <property type="match status" value="1"/>
</dbReference>
<dbReference type="PANTHER" id="PTHR43697:SF1">
    <property type="entry name" value="SERINE--TRNA LIGASE"/>
    <property type="match status" value="1"/>
</dbReference>
<dbReference type="PANTHER" id="PTHR43697">
    <property type="entry name" value="SERYL-TRNA SYNTHETASE"/>
    <property type="match status" value="1"/>
</dbReference>
<dbReference type="Pfam" id="PF02403">
    <property type="entry name" value="Seryl_tRNA_N"/>
    <property type="match status" value="1"/>
</dbReference>
<dbReference type="Pfam" id="PF00587">
    <property type="entry name" value="tRNA-synt_2b"/>
    <property type="match status" value="1"/>
</dbReference>
<dbReference type="PIRSF" id="PIRSF001529">
    <property type="entry name" value="Ser-tRNA-synth_IIa"/>
    <property type="match status" value="1"/>
</dbReference>
<dbReference type="PRINTS" id="PR00981">
    <property type="entry name" value="TRNASYNTHSER"/>
</dbReference>
<dbReference type="SUPFAM" id="SSF55681">
    <property type="entry name" value="Class II aaRS and biotin synthetases"/>
    <property type="match status" value="1"/>
</dbReference>
<dbReference type="SUPFAM" id="SSF46589">
    <property type="entry name" value="tRNA-binding arm"/>
    <property type="match status" value="1"/>
</dbReference>
<dbReference type="PROSITE" id="PS50862">
    <property type="entry name" value="AA_TRNA_LIGASE_II"/>
    <property type="match status" value="1"/>
</dbReference>